<gene>
    <name type="primary">insB1</name>
    <name type="ordered locus">SF0291</name>
</gene>
<gene>
    <name type="primary">insB2</name>
    <name type="ordered locus">SF1001</name>
</gene>
<gene>
    <name type="primary">insB3</name>
    <name type="ordered locus">SF1242</name>
</gene>
<gene>
    <name type="primary">insB4</name>
    <name type="ordered locus">SF1385</name>
</gene>
<gene>
    <name type="primary">insB5</name>
    <name type="ordered locus">SF1492</name>
</gene>
<gene>
    <name type="primary">insB6</name>
    <name type="ordered locus">SF1510</name>
</gene>
<gene>
    <name type="primary">insB7</name>
    <name type="ordered locus">SF1733</name>
</gene>
<gene>
    <name type="primary">insB8</name>
    <name type="ordered locus">SF1759</name>
</gene>
<gene>
    <name type="primary">insB9</name>
    <name type="ordered locus">SF1942</name>
</gene>
<gene>
    <name type="primary">insB10</name>
    <name type="ordered locus">SF2013</name>
</gene>
<gene>
    <name type="primary">insB11</name>
    <name type="ordered locus">SF2077</name>
</gene>
<gene>
    <name type="primary">insB12</name>
    <name type="ordered locus">SF2184</name>
</gene>
<gene>
    <name type="primary">insB13</name>
    <name type="ordered locus">SF2950</name>
</gene>
<gene>
    <name type="primary">insB14</name>
    <name type="ordered locus">SF3086</name>
</gene>
<gene>
    <name type="primary">insB15</name>
    <name type="ordered locus">SF3136</name>
</gene>
<gene>
    <name type="primary">insB16</name>
    <name type="ordered locus">SF3174</name>
</gene>
<gene>
    <name type="primary">insB17</name>
    <name type="ordered locus">SF3601</name>
</gene>
<gene>
    <name type="primary">insB18</name>
    <name type="ordered locus">SF3625</name>
</gene>
<gene>
    <name type="primary">insB19</name>
    <name type="ordered locus">SF3637</name>
</gene>
<gene>
    <name type="primary">insB20</name>
    <name type="ordered locus">SF3832</name>
</gene>
<gene>
    <name type="primary">insB21</name>
    <name type="ordered locus">SF3882</name>
</gene>
<gene>
    <name type="primary">insB22</name>
    <name type="ordered locus">SF3946</name>
</gene>
<gene>
    <name type="primary">insB23</name>
    <name type="ordered locus">SF3972</name>
</gene>
<gene>
    <name type="primary">insB24</name>
    <name type="ordered locus">SF4042</name>
</gene>
<gene>
    <name type="primary">insB25</name>
    <name type="ordered locus">SF4301</name>
</gene>
<sequence>MIVCAEMDEHWGYVGAKSRQRWLFYAYDRIRRTVVAHVFGERTLATLERLLSLLSAFEVVVWMTDGWPLYESRLKGKLHVISKRYTQRIERHNLNLRQHLARLGRKSLSFSKSVELHDKVIGHYLNIKHYQ</sequence>
<keyword id="KW-0233">DNA recombination</keyword>
<keyword id="KW-1185">Reference proteome</keyword>
<keyword id="KW-0814">Transposable element</keyword>
<keyword id="KW-0815">Transposition</keyword>
<name>INSB_SHIFL</name>
<protein>
    <recommendedName>
        <fullName>Insertion element IS1 protein InsB</fullName>
    </recommendedName>
</protein>
<proteinExistence type="inferred from homology"/>
<comment type="function">
    <text>Absolutely required for transposition of IS1.</text>
</comment>
<comment type="similarity">
    <text evidence="1">Belongs to the transposase 27 family.</text>
</comment>
<accession>P19765</accession>
<reference key="1">
    <citation type="journal article" date="1984" name="J. Gen. Appl. Microbiol.">
        <title>An evolutionary analysis of iso-IS1 elements from Escherichia coli and Shigella strains.</title>
        <authorList>
            <person name="Ohtsubo E."/>
            <person name="Ohtsubo H."/>
            <person name="Doroszkiewicz W."/>
            <person name="Nyman K."/>
            <person name="Allen D."/>
            <person name="Davison D."/>
        </authorList>
    </citation>
    <scope>NUCLEOTIDE SEQUENCE [GENOMIC DNA]</scope>
</reference>
<reference key="2">
    <citation type="journal article" date="2002" name="Nucleic Acids Res.">
        <title>Genome sequence of Shigella flexneri 2a: insights into pathogenicity through comparison with genomes of Escherichia coli K12 and O157.</title>
        <authorList>
            <person name="Jin Q."/>
            <person name="Yuan Z."/>
            <person name="Xu J."/>
            <person name="Wang Y."/>
            <person name="Shen Y."/>
            <person name="Lu W."/>
            <person name="Wang J."/>
            <person name="Liu H."/>
            <person name="Yang J."/>
            <person name="Yang F."/>
            <person name="Zhang X."/>
            <person name="Zhang J."/>
            <person name="Yang G."/>
            <person name="Wu H."/>
            <person name="Qu D."/>
            <person name="Dong J."/>
            <person name="Sun L."/>
            <person name="Xue Y."/>
            <person name="Zhao A."/>
            <person name="Gao Y."/>
            <person name="Zhu J."/>
            <person name="Kan B."/>
            <person name="Ding K."/>
            <person name="Chen S."/>
            <person name="Cheng H."/>
            <person name="Yao Z."/>
            <person name="He B."/>
            <person name="Chen R."/>
            <person name="Ma D."/>
            <person name="Qiang B."/>
            <person name="Wen Y."/>
            <person name="Hou Y."/>
            <person name="Yu J."/>
        </authorList>
    </citation>
    <scope>NUCLEOTIDE SEQUENCE [LARGE SCALE GENOMIC DNA]</scope>
    <source>
        <strain>301 / Serotype 2a</strain>
    </source>
</reference>
<organism>
    <name type="scientific">Shigella flexneri</name>
    <dbReference type="NCBI Taxonomy" id="623"/>
    <lineage>
        <taxon>Bacteria</taxon>
        <taxon>Pseudomonadati</taxon>
        <taxon>Pseudomonadota</taxon>
        <taxon>Gammaproteobacteria</taxon>
        <taxon>Enterobacterales</taxon>
        <taxon>Enterobacteriaceae</taxon>
        <taxon>Shigella</taxon>
    </lineage>
</organism>
<evidence type="ECO:0000305" key="1"/>
<dbReference type="EMBL" id="M37616">
    <property type="protein sequence ID" value="AAA96692.1"/>
    <property type="molecule type" value="Genomic_DNA"/>
</dbReference>
<dbReference type="EMBL" id="AE005674">
    <property type="protein sequence ID" value="AAN41950.1"/>
    <property type="molecule type" value="Genomic_DNA"/>
</dbReference>
<dbReference type="EMBL" id="AE005674">
    <property type="protein sequence ID" value="AAN42627.1"/>
    <property type="molecule type" value="Genomic_DNA"/>
</dbReference>
<dbReference type="EMBL" id="AE005674">
    <property type="protein sequence ID" value="AAN42855.1"/>
    <property type="molecule type" value="Genomic_DNA"/>
</dbReference>
<dbReference type="EMBL" id="AE005674">
    <property type="protein sequence ID" value="AAN42988.1"/>
    <property type="molecule type" value="Genomic_DNA"/>
</dbReference>
<dbReference type="EMBL" id="AE005674">
    <property type="protein sequence ID" value="AAN43083.1"/>
    <property type="molecule type" value="Genomic_DNA"/>
</dbReference>
<dbReference type="EMBL" id="AE005674">
    <property type="protein sequence ID" value="AAN43100.1"/>
    <property type="molecule type" value="Genomic_DNA"/>
</dbReference>
<dbReference type="EMBL" id="AE005674">
    <property type="protein sequence ID" value="AAN43308.1"/>
    <property type="molecule type" value="Genomic_DNA"/>
</dbReference>
<dbReference type="EMBL" id="AE005674">
    <property type="protein sequence ID" value="AAN43331.1"/>
    <property type="molecule type" value="Genomic_DNA"/>
</dbReference>
<dbReference type="EMBL" id="AE005674">
    <property type="protein sequence ID" value="AAN43495.1"/>
    <property type="molecule type" value="Genomic_DNA"/>
</dbReference>
<dbReference type="EMBL" id="AE005674">
    <property type="protein sequence ID" value="AAN43558.1"/>
    <property type="molecule type" value="Genomic_DNA"/>
</dbReference>
<dbReference type="EMBL" id="AE005674">
    <property type="protein sequence ID" value="AAN43617.1"/>
    <property type="molecule type" value="Genomic_DNA"/>
</dbReference>
<dbReference type="EMBL" id="AE005674">
    <property type="protein sequence ID" value="AAN43712.1"/>
    <property type="molecule type" value="Genomic_DNA"/>
</dbReference>
<dbReference type="EMBL" id="AE005674">
    <property type="protein sequence ID" value="AAN44431.1"/>
    <property type="molecule type" value="Genomic_DNA"/>
</dbReference>
<dbReference type="EMBL" id="AE005674">
    <property type="protein sequence ID" value="AAN44564.1"/>
    <property type="molecule type" value="Genomic_DNA"/>
</dbReference>
<dbReference type="EMBL" id="AE005674">
    <property type="protein sequence ID" value="AAN44608.1"/>
    <property type="molecule type" value="Genomic_DNA"/>
</dbReference>
<dbReference type="EMBL" id="AE005674">
    <property type="protein sequence ID" value="AAN44643.1"/>
    <property type="molecule type" value="Genomic_DNA"/>
</dbReference>
<dbReference type="EMBL" id="AE005674">
    <property type="protein sequence ID" value="AAN45051.1"/>
    <property type="molecule type" value="Genomic_DNA"/>
</dbReference>
<dbReference type="EMBL" id="AE005674">
    <property type="protein sequence ID" value="AAN45072.1"/>
    <property type="molecule type" value="Genomic_DNA"/>
</dbReference>
<dbReference type="EMBL" id="AE005674">
    <property type="protein sequence ID" value="AAN45084.1"/>
    <property type="molecule type" value="Genomic_DNA"/>
</dbReference>
<dbReference type="EMBL" id="AE005674">
    <property type="protein sequence ID" value="AAN45271.1"/>
    <property type="molecule type" value="Genomic_DNA"/>
</dbReference>
<dbReference type="EMBL" id="AE005674">
    <property type="protein sequence ID" value="AAN45318.1"/>
    <property type="molecule type" value="Genomic_DNA"/>
</dbReference>
<dbReference type="EMBL" id="AE005674">
    <property type="protein sequence ID" value="AAN45381.1"/>
    <property type="molecule type" value="Genomic_DNA"/>
</dbReference>
<dbReference type="EMBL" id="AE005674">
    <property type="protein sequence ID" value="AAN45407.1"/>
    <property type="molecule type" value="Genomic_DNA"/>
</dbReference>
<dbReference type="EMBL" id="AE005674">
    <property type="protein sequence ID" value="AAN45471.1"/>
    <property type="molecule type" value="Genomic_DNA"/>
</dbReference>
<dbReference type="EMBL" id="AE005674">
    <property type="protein sequence ID" value="AAN45719.1"/>
    <property type="molecule type" value="Genomic_DNA"/>
</dbReference>
<dbReference type="RefSeq" id="WP_000634384.1">
    <property type="nucleotide sequence ID" value="NZ_UIPJ01000065.1"/>
</dbReference>
<dbReference type="SMR" id="P19765"/>
<dbReference type="STRING" id="198214.SF0291"/>
<dbReference type="PaxDb" id="198214-SF0291"/>
<dbReference type="KEGG" id="sfl:SF0291"/>
<dbReference type="KEGG" id="sfl:SF1001"/>
<dbReference type="KEGG" id="sfl:SF1242"/>
<dbReference type="KEGG" id="sfl:SF1385"/>
<dbReference type="KEGG" id="sfl:SF1492"/>
<dbReference type="KEGG" id="sfl:SF1510"/>
<dbReference type="KEGG" id="sfl:SF1733"/>
<dbReference type="KEGG" id="sfl:SF1759"/>
<dbReference type="KEGG" id="sfl:SF1942"/>
<dbReference type="KEGG" id="sfl:SF2013"/>
<dbReference type="KEGG" id="sfl:SF2077"/>
<dbReference type="KEGG" id="sfl:SF2184"/>
<dbReference type="KEGG" id="sfl:SF2950"/>
<dbReference type="KEGG" id="sfl:SF3086"/>
<dbReference type="KEGG" id="sfl:SF3136"/>
<dbReference type="KEGG" id="sfl:SF3174"/>
<dbReference type="KEGG" id="sfl:SF3601"/>
<dbReference type="KEGG" id="sfl:SF3625"/>
<dbReference type="KEGG" id="sfl:SF3637"/>
<dbReference type="KEGG" id="sfl:SF3832"/>
<dbReference type="KEGG" id="sfl:SF3882"/>
<dbReference type="KEGG" id="sfl:SF3946"/>
<dbReference type="KEGG" id="sfl:SF3972"/>
<dbReference type="KEGG" id="sfl:SF4042"/>
<dbReference type="KEGG" id="sfl:SF4301"/>
<dbReference type="PATRIC" id="fig|198214.7.peg.1163"/>
<dbReference type="HOGENOM" id="CLU_076276_2_1_6"/>
<dbReference type="Proteomes" id="UP000001006">
    <property type="component" value="Chromosome"/>
</dbReference>
<dbReference type="GO" id="GO:0003677">
    <property type="term" value="F:DNA binding"/>
    <property type="evidence" value="ECO:0007669"/>
    <property type="project" value="InterPro"/>
</dbReference>
<dbReference type="GO" id="GO:0004803">
    <property type="term" value="F:transposase activity"/>
    <property type="evidence" value="ECO:0007669"/>
    <property type="project" value="InterPro"/>
</dbReference>
<dbReference type="GO" id="GO:0006313">
    <property type="term" value="P:DNA transposition"/>
    <property type="evidence" value="ECO:0007669"/>
    <property type="project" value="InterPro"/>
</dbReference>
<dbReference type="InterPro" id="IPR005063">
    <property type="entry name" value="Transposase_27"/>
</dbReference>
<dbReference type="InterPro" id="IPR051354">
    <property type="entry name" value="Transposase_27_IS1"/>
</dbReference>
<dbReference type="NCBIfam" id="NF033558">
    <property type="entry name" value="transpos_IS1"/>
    <property type="match status" value="1"/>
</dbReference>
<dbReference type="PANTHER" id="PTHR33293">
    <property type="entry name" value="INSERTION ELEMENT IS1 1 PROTEIN INSB-RELATED"/>
    <property type="match status" value="1"/>
</dbReference>
<dbReference type="PANTHER" id="PTHR33293:SF1">
    <property type="entry name" value="INSERTION ELEMENT IS1 1 PROTEIN INSB-RELATED"/>
    <property type="match status" value="1"/>
</dbReference>
<dbReference type="Pfam" id="PF03400">
    <property type="entry name" value="DDE_Tnp_IS1"/>
    <property type="match status" value="1"/>
</dbReference>
<feature type="chain" id="PRO_0000075406" description="Insertion element IS1 protein InsB">
    <location>
        <begin position="1"/>
        <end position="131"/>
    </location>
</feature>
<feature type="sequence conflict" description="In Ref. 1; AAA96692." evidence="1" ref="1">
    <original>I</original>
    <variation>L</variation>
    <location>
        <position position="30"/>
    </location>
</feature>
<feature type="sequence conflict" description="In Ref. 1; AAA96692." evidence="1" ref="1">
    <original>V</original>
    <variation>L</variation>
    <location>
        <position position="59"/>
    </location>
</feature>
<feature type="sequence conflict" description="In Ref. 1; AAA96692." evidence="1" ref="1">
    <original>R</original>
    <variation>S</variation>
    <location>
        <position position="73"/>
    </location>
</feature>